<sequence length="364" mass="40254">MPKPAIKTAAKPATSSAGKRGKPITPKSVAKPQAAKPKTVSKPKVKPGEKKRLHPRNLHINGYDFPVLMVSYPKLKAFVRPTPYGDLSIDFADPSAVKTLNAALLQHHYGLAFWDIPKGALCPPIPGRVDYLHYLADLLFEGGKVKRAAAIRALDIGTGANGVYAILGHQVYDWQFVASDINPQSLTNVQRIIDNNPSLQGHLSLRRQQDDKAVFKGIIQASDRFELTLCNPPFHGSLKEASQGSLRKVRNLQLNRGEQPKATSATLNFGGQAAELWCQGGEKQFLATMIRESQAFAEQCLWFTSLVSKQENLKPCYQALEKLGVDTVKTIEMQQGNKITRLLAWSFHSQAKRLQWRNQIVSGT</sequence>
<evidence type="ECO:0000255" key="1">
    <source>
        <dbReference type="HAMAP-Rule" id="MF_01848"/>
    </source>
</evidence>
<evidence type="ECO:0000256" key="2">
    <source>
        <dbReference type="SAM" id="MobiDB-lite"/>
    </source>
</evidence>
<gene>
    <name evidence="1" type="primary">rlmF</name>
    <name type="ordered locus">Shewmr4_0128</name>
</gene>
<protein>
    <recommendedName>
        <fullName evidence="1">Ribosomal RNA large subunit methyltransferase F</fullName>
        <ecNumber evidence="1">2.1.1.181</ecNumber>
    </recommendedName>
    <alternativeName>
        <fullName evidence="1">23S rRNA mA1618 methyltransferase</fullName>
    </alternativeName>
    <alternativeName>
        <fullName evidence="1">rRNA adenine N-6-methyltransferase</fullName>
    </alternativeName>
</protein>
<dbReference type="EC" id="2.1.1.181" evidence="1"/>
<dbReference type="EMBL" id="CP000446">
    <property type="protein sequence ID" value="ABI37209.1"/>
    <property type="molecule type" value="Genomic_DNA"/>
</dbReference>
<dbReference type="RefSeq" id="WP_011620961.1">
    <property type="nucleotide sequence ID" value="NC_008321.1"/>
</dbReference>
<dbReference type="SMR" id="Q0HP08"/>
<dbReference type="KEGG" id="she:Shewmr4_0128"/>
<dbReference type="HOGENOM" id="CLU_027534_3_0_6"/>
<dbReference type="GO" id="GO:0005737">
    <property type="term" value="C:cytoplasm"/>
    <property type="evidence" value="ECO:0007669"/>
    <property type="project" value="UniProtKB-SubCell"/>
</dbReference>
<dbReference type="GO" id="GO:0052907">
    <property type="term" value="F:23S rRNA (adenine(1618)-N(6))-methyltransferase activity"/>
    <property type="evidence" value="ECO:0007669"/>
    <property type="project" value="UniProtKB-EC"/>
</dbReference>
<dbReference type="GO" id="GO:0070475">
    <property type="term" value="P:rRNA base methylation"/>
    <property type="evidence" value="ECO:0007669"/>
    <property type="project" value="TreeGrafter"/>
</dbReference>
<dbReference type="Gene3D" id="3.40.50.150">
    <property type="entry name" value="Vaccinia Virus protein VP39"/>
    <property type="match status" value="1"/>
</dbReference>
<dbReference type="HAMAP" id="MF_01848">
    <property type="entry name" value="23SrRNA_methyltr_F"/>
    <property type="match status" value="1"/>
</dbReference>
<dbReference type="InterPro" id="IPR010286">
    <property type="entry name" value="METTL16/RlmF"/>
</dbReference>
<dbReference type="InterPro" id="IPR016909">
    <property type="entry name" value="rRNA_lsu_MeTfrase_F"/>
</dbReference>
<dbReference type="InterPro" id="IPR029063">
    <property type="entry name" value="SAM-dependent_MTases_sf"/>
</dbReference>
<dbReference type="NCBIfam" id="NF008725">
    <property type="entry name" value="PRK11727.1"/>
    <property type="match status" value="1"/>
</dbReference>
<dbReference type="PANTHER" id="PTHR13393:SF0">
    <property type="entry name" value="RNA N6-ADENOSINE-METHYLTRANSFERASE METTL16"/>
    <property type="match status" value="1"/>
</dbReference>
<dbReference type="PANTHER" id="PTHR13393">
    <property type="entry name" value="SAM-DEPENDENT METHYLTRANSFERASE"/>
    <property type="match status" value="1"/>
</dbReference>
<dbReference type="Pfam" id="PF05971">
    <property type="entry name" value="Methyltransf_10"/>
    <property type="match status" value="1"/>
</dbReference>
<dbReference type="PIRSF" id="PIRSF029038">
    <property type="entry name" value="Mtase_YbiN_prd"/>
    <property type="match status" value="1"/>
</dbReference>
<dbReference type="SUPFAM" id="SSF53335">
    <property type="entry name" value="S-adenosyl-L-methionine-dependent methyltransferases"/>
    <property type="match status" value="1"/>
</dbReference>
<name>RLMF_SHESM</name>
<keyword id="KW-0963">Cytoplasm</keyword>
<keyword id="KW-0489">Methyltransferase</keyword>
<keyword id="KW-0698">rRNA processing</keyword>
<keyword id="KW-0949">S-adenosyl-L-methionine</keyword>
<keyword id="KW-0808">Transferase</keyword>
<reference key="1">
    <citation type="submission" date="2006-08" db="EMBL/GenBank/DDBJ databases">
        <title>Complete sequence of Shewanella sp. MR-4.</title>
        <authorList>
            <consortium name="US DOE Joint Genome Institute"/>
            <person name="Copeland A."/>
            <person name="Lucas S."/>
            <person name="Lapidus A."/>
            <person name="Barry K."/>
            <person name="Detter J.C."/>
            <person name="Glavina del Rio T."/>
            <person name="Hammon N."/>
            <person name="Israni S."/>
            <person name="Dalin E."/>
            <person name="Tice H."/>
            <person name="Pitluck S."/>
            <person name="Kiss H."/>
            <person name="Brettin T."/>
            <person name="Bruce D."/>
            <person name="Han C."/>
            <person name="Tapia R."/>
            <person name="Gilna P."/>
            <person name="Schmutz J."/>
            <person name="Larimer F."/>
            <person name="Land M."/>
            <person name="Hauser L."/>
            <person name="Kyrpides N."/>
            <person name="Mikhailova N."/>
            <person name="Nealson K."/>
            <person name="Konstantinidis K."/>
            <person name="Klappenbach J."/>
            <person name="Tiedje J."/>
            <person name="Richardson P."/>
        </authorList>
    </citation>
    <scope>NUCLEOTIDE SEQUENCE [LARGE SCALE GENOMIC DNA]</scope>
    <source>
        <strain>MR-4</strain>
    </source>
</reference>
<accession>Q0HP08</accession>
<proteinExistence type="inferred from homology"/>
<comment type="function">
    <text evidence="1">Specifically methylates the adenine in position 1618 of 23S rRNA.</text>
</comment>
<comment type="catalytic activity">
    <reaction evidence="1">
        <text>adenosine(1618) in 23S rRNA + S-adenosyl-L-methionine = N(6)-methyladenosine(1618) in 23S rRNA + S-adenosyl-L-homocysteine + H(+)</text>
        <dbReference type="Rhea" id="RHEA:16497"/>
        <dbReference type="Rhea" id="RHEA-COMP:10229"/>
        <dbReference type="Rhea" id="RHEA-COMP:10231"/>
        <dbReference type="ChEBI" id="CHEBI:15378"/>
        <dbReference type="ChEBI" id="CHEBI:57856"/>
        <dbReference type="ChEBI" id="CHEBI:59789"/>
        <dbReference type="ChEBI" id="CHEBI:74411"/>
        <dbReference type="ChEBI" id="CHEBI:74449"/>
        <dbReference type="EC" id="2.1.1.181"/>
    </reaction>
</comment>
<comment type="subcellular location">
    <subcellularLocation>
        <location evidence="1">Cytoplasm</location>
    </subcellularLocation>
</comment>
<comment type="similarity">
    <text evidence="1">Belongs to the methyltransferase superfamily. METTL16/RlmF family.</text>
</comment>
<organism>
    <name type="scientific">Shewanella sp. (strain MR-4)</name>
    <dbReference type="NCBI Taxonomy" id="60480"/>
    <lineage>
        <taxon>Bacteria</taxon>
        <taxon>Pseudomonadati</taxon>
        <taxon>Pseudomonadota</taxon>
        <taxon>Gammaproteobacteria</taxon>
        <taxon>Alteromonadales</taxon>
        <taxon>Shewanellaceae</taxon>
        <taxon>Shewanella</taxon>
    </lineage>
</organism>
<feature type="chain" id="PRO_0000349963" description="Ribosomal RNA large subunit methyltransferase F">
    <location>
        <begin position="1"/>
        <end position="364"/>
    </location>
</feature>
<feature type="region of interest" description="Disordered" evidence="2">
    <location>
        <begin position="1"/>
        <end position="53"/>
    </location>
</feature>
<feature type="compositionally biased region" description="Low complexity" evidence="2">
    <location>
        <begin position="1"/>
        <end position="17"/>
    </location>
</feature>
<feature type="compositionally biased region" description="Basic residues" evidence="2">
    <location>
        <begin position="39"/>
        <end position="53"/>
    </location>
</feature>